<dbReference type="EMBL" id="BC005801">
    <property type="protein sequence ID" value="AAH05801.1"/>
    <property type="molecule type" value="mRNA"/>
</dbReference>
<dbReference type="EMBL" id="BC014869">
    <property type="protein sequence ID" value="AAH14869.1"/>
    <property type="molecule type" value="mRNA"/>
</dbReference>
<dbReference type="EMBL" id="BC023691">
    <property type="protein sequence ID" value="AAH23691.2"/>
    <property type="molecule type" value="mRNA"/>
</dbReference>
<dbReference type="EMBL" id="BC025030">
    <property type="protein sequence ID" value="AAH25030.1"/>
    <property type="molecule type" value="mRNA"/>
</dbReference>
<dbReference type="EMBL" id="AK011639">
    <property type="protein sequence ID" value="BAB27751.1"/>
    <property type="molecule type" value="mRNA"/>
</dbReference>
<dbReference type="EMBL" id="AK145461">
    <property type="protein sequence ID" value="BAE26451.1"/>
    <property type="molecule type" value="mRNA"/>
</dbReference>
<dbReference type="EMBL" id="AK081998">
    <property type="protein sequence ID" value="BAC38390.1"/>
    <property type="molecule type" value="mRNA"/>
</dbReference>
<dbReference type="EMBL" id="AL844529">
    <property type="status" value="NOT_ANNOTATED_CDS"/>
    <property type="molecule type" value="Genomic_DNA"/>
</dbReference>
<dbReference type="EMBL" id="CH466626">
    <property type="protein sequence ID" value="EDL07438.1"/>
    <property type="molecule type" value="Genomic_DNA"/>
</dbReference>
<dbReference type="CCDS" id="CCDS38381.1">
    <molecule id="Q91YR7-1"/>
</dbReference>
<dbReference type="RefSeq" id="NP_598462.1">
    <molecule id="Q91YR7-1"/>
    <property type="nucleotide sequence ID" value="NM_133701.2"/>
</dbReference>
<dbReference type="PDB" id="6QX9">
    <property type="method" value="EM"/>
    <property type="resolution" value="3.28 A"/>
    <property type="chains" value="5J=18-655"/>
</dbReference>
<dbReference type="PDBsum" id="6QX9"/>
<dbReference type="SMR" id="Q91YR7"/>
<dbReference type="BioGRID" id="213097">
    <property type="interactions" value="8"/>
</dbReference>
<dbReference type="FunCoup" id="Q91YR7">
    <property type="interactions" value="4145"/>
</dbReference>
<dbReference type="IntAct" id="Q91YR7">
    <property type="interactions" value="4"/>
</dbReference>
<dbReference type="MINT" id="Q91YR7"/>
<dbReference type="STRING" id="10090.ENSMUSP00000002529"/>
<dbReference type="iPTMnet" id="Q91YR7"/>
<dbReference type="PhosphoSitePlus" id="Q91YR7"/>
<dbReference type="SwissPalm" id="Q91YR7"/>
<dbReference type="jPOST" id="Q91YR7"/>
<dbReference type="PaxDb" id="10090-ENSMUSP00000002529"/>
<dbReference type="PeptideAtlas" id="Q91YR7"/>
<dbReference type="ProteomicsDB" id="291793">
    <molecule id="Q91YR7-1"/>
</dbReference>
<dbReference type="ProteomicsDB" id="291794">
    <molecule id="Q91YR7-2"/>
</dbReference>
<dbReference type="Pumba" id="Q91YR7"/>
<dbReference type="Antibodypedia" id="15475">
    <property type="antibodies" value="220 antibodies from 30 providers"/>
</dbReference>
<dbReference type="DNASU" id="68879"/>
<dbReference type="Ensembl" id="ENSMUST00000002529.7">
    <molecule id="Q91YR7-1"/>
    <property type="protein sequence ID" value="ENSMUSP00000002529.7"/>
    <property type="gene ID" value="ENSMUSG00000002455.15"/>
</dbReference>
<dbReference type="Ensembl" id="ENSMUST00000136481.8">
    <molecule id="Q91YR7-1"/>
    <property type="protein sequence ID" value="ENSMUSP00000121340.2"/>
    <property type="gene ID" value="ENSMUSG00000002455.15"/>
</dbReference>
<dbReference type="GeneID" id="68879"/>
<dbReference type="KEGG" id="mmu:68879"/>
<dbReference type="UCSC" id="uc008omy.1">
    <molecule id="Q91YR7-2"/>
    <property type="organism name" value="mouse"/>
</dbReference>
<dbReference type="UCSC" id="uc008omz.1">
    <molecule id="Q91YR7-1"/>
    <property type="organism name" value="mouse"/>
</dbReference>
<dbReference type="AGR" id="MGI:1922946"/>
<dbReference type="CTD" id="24148"/>
<dbReference type="MGI" id="MGI:1922946">
    <property type="gene designation" value="Prpf6"/>
</dbReference>
<dbReference type="VEuPathDB" id="HostDB:ENSMUSG00000002455"/>
<dbReference type="eggNOG" id="KOG0495">
    <property type="taxonomic scope" value="Eukaryota"/>
</dbReference>
<dbReference type="GeneTree" id="ENSGT00550000075016"/>
<dbReference type="HOGENOM" id="CLU_007010_0_0_1"/>
<dbReference type="InParanoid" id="Q91YR7"/>
<dbReference type="OMA" id="DGWAWYY"/>
<dbReference type="OrthoDB" id="440128at2759"/>
<dbReference type="PhylomeDB" id="Q91YR7"/>
<dbReference type="TreeFam" id="TF105743"/>
<dbReference type="Reactome" id="R-MMU-72163">
    <property type="pathway name" value="mRNA Splicing - Major Pathway"/>
</dbReference>
<dbReference type="Reactome" id="R-MMU-72165">
    <property type="pathway name" value="mRNA Splicing - Minor Pathway"/>
</dbReference>
<dbReference type="BioGRID-ORCS" id="68879">
    <property type="hits" value="27 hits in 80 CRISPR screens"/>
</dbReference>
<dbReference type="ChiTaRS" id="Prpf6">
    <property type="organism name" value="mouse"/>
</dbReference>
<dbReference type="PRO" id="PR:Q91YR7"/>
<dbReference type="Proteomes" id="UP000000589">
    <property type="component" value="Chromosome 2"/>
</dbReference>
<dbReference type="RNAct" id="Q91YR7">
    <property type="molecule type" value="protein"/>
</dbReference>
<dbReference type="Bgee" id="ENSMUSG00000002455">
    <property type="expression patterns" value="Expressed in floor plate of midbrain and 274 other cell types or tissues"/>
</dbReference>
<dbReference type="ExpressionAtlas" id="Q91YR7">
    <property type="expression patterns" value="baseline and differential"/>
</dbReference>
<dbReference type="GO" id="GO:0071013">
    <property type="term" value="C:catalytic step 2 spliceosome"/>
    <property type="evidence" value="ECO:0007669"/>
    <property type="project" value="Ensembl"/>
</dbReference>
<dbReference type="GO" id="GO:0005813">
    <property type="term" value="C:centrosome"/>
    <property type="evidence" value="ECO:0007669"/>
    <property type="project" value="Ensembl"/>
</dbReference>
<dbReference type="GO" id="GO:0036064">
    <property type="term" value="C:ciliary basal body"/>
    <property type="evidence" value="ECO:0007669"/>
    <property type="project" value="Ensembl"/>
</dbReference>
<dbReference type="GO" id="GO:0005829">
    <property type="term" value="C:cytosol"/>
    <property type="evidence" value="ECO:0007669"/>
    <property type="project" value="Ensembl"/>
</dbReference>
<dbReference type="GO" id="GO:0016607">
    <property type="term" value="C:nuclear speck"/>
    <property type="evidence" value="ECO:0000250"/>
    <property type="project" value="UniProtKB"/>
</dbReference>
<dbReference type="GO" id="GO:0005634">
    <property type="term" value="C:nucleus"/>
    <property type="evidence" value="ECO:0000266"/>
    <property type="project" value="MGI"/>
</dbReference>
<dbReference type="GO" id="GO:0071005">
    <property type="term" value="C:U2-type precatalytic spliceosome"/>
    <property type="evidence" value="ECO:0000250"/>
    <property type="project" value="UniProtKB"/>
</dbReference>
<dbReference type="GO" id="GO:0046540">
    <property type="term" value="C:U4/U6 x U5 tri-snRNP complex"/>
    <property type="evidence" value="ECO:0007669"/>
    <property type="project" value="Ensembl"/>
</dbReference>
<dbReference type="GO" id="GO:0005682">
    <property type="term" value="C:U5 snRNP"/>
    <property type="evidence" value="ECO:0007669"/>
    <property type="project" value="Ensembl"/>
</dbReference>
<dbReference type="GO" id="GO:0042802">
    <property type="term" value="F:identical protein binding"/>
    <property type="evidence" value="ECO:0007669"/>
    <property type="project" value="Ensembl"/>
</dbReference>
<dbReference type="GO" id="GO:0050681">
    <property type="term" value="F:nuclear androgen receptor binding"/>
    <property type="evidence" value="ECO:0000266"/>
    <property type="project" value="MGI"/>
</dbReference>
<dbReference type="GO" id="GO:0030674">
    <property type="term" value="F:protein-macromolecule adaptor activity"/>
    <property type="evidence" value="ECO:0000250"/>
    <property type="project" value="UniProtKB"/>
</dbReference>
<dbReference type="GO" id="GO:0043021">
    <property type="term" value="F:ribonucleoprotein complex binding"/>
    <property type="evidence" value="ECO:0007669"/>
    <property type="project" value="Ensembl"/>
</dbReference>
<dbReference type="GO" id="GO:0003723">
    <property type="term" value="F:RNA binding"/>
    <property type="evidence" value="ECO:0000266"/>
    <property type="project" value="MGI"/>
</dbReference>
<dbReference type="GO" id="GO:0003713">
    <property type="term" value="F:transcription coactivator activity"/>
    <property type="evidence" value="ECO:0000266"/>
    <property type="project" value="MGI"/>
</dbReference>
<dbReference type="GO" id="GO:0000398">
    <property type="term" value="P:mRNA splicing, via spliceosome"/>
    <property type="evidence" value="ECO:0000250"/>
    <property type="project" value="UniProtKB"/>
</dbReference>
<dbReference type="GO" id="GO:0045944">
    <property type="term" value="P:positive regulation of transcription by RNA polymerase II"/>
    <property type="evidence" value="ECO:0000266"/>
    <property type="project" value="MGI"/>
</dbReference>
<dbReference type="GO" id="GO:0006403">
    <property type="term" value="P:RNA localization"/>
    <property type="evidence" value="ECO:0000266"/>
    <property type="project" value="MGI"/>
</dbReference>
<dbReference type="GO" id="GO:0000244">
    <property type="term" value="P:spliceosomal tri-snRNP complex assembly"/>
    <property type="evidence" value="ECO:0000250"/>
    <property type="project" value="UniProtKB"/>
</dbReference>
<dbReference type="FunFam" id="1.25.40.10:FF:000649">
    <property type="entry name" value="mRNA splicing factor (Prp1/Zer1), putative"/>
    <property type="match status" value="1"/>
</dbReference>
<dbReference type="FunFam" id="1.25.40.10:FF:000054">
    <property type="entry name" value="Pre-mRNA processing factor 6"/>
    <property type="match status" value="1"/>
</dbReference>
<dbReference type="FunFam" id="1.25.40.10:FF:000058">
    <property type="entry name" value="Pre-mRNA processing factor 6"/>
    <property type="match status" value="1"/>
</dbReference>
<dbReference type="FunFam" id="1.25.40.10:FF:003529">
    <property type="entry name" value="Uncharacterized protein"/>
    <property type="match status" value="1"/>
</dbReference>
<dbReference type="Gene3D" id="1.25.40.10">
    <property type="entry name" value="Tetratricopeptide repeat domain"/>
    <property type="match status" value="3"/>
</dbReference>
<dbReference type="InterPro" id="IPR003107">
    <property type="entry name" value="HAT"/>
</dbReference>
<dbReference type="InterPro" id="IPR010491">
    <property type="entry name" value="PRP1_N"/>
</dbReference>
<dbReference type="InterPro" id="IPR045075">
    <property type="entry name" value="Syf1-like"/>
</dbReference>
<dbReference type="InterPro" id="IPR011990">
    <property type="entry name" value="TPR-like_helical_dom_sf"/>
</dbReference>
<dbReference type="InterPro" id="IPR019734">
    <property type="entry name" value="TPR_rpt"/>
</dbReference>
<dbReference type="PANTHER" id="PTHR11246">
    <property type="entry name" value="PRE-MRNA SPLICING FACTOR"/>
    <property type="match status" value="1"/>
</dbReference>
<dbReference type="PANTHER" id="PTHR11246:SF1">
    <property type="entry name" value="PRE-MRNA-PROCESSING FACTOR 6"/>
    <property type="match status" value="1"/>
</dbReference>
<dbReference type="Pfam" id="PF06424">
    <property type="entry name" value="PRP1_N"/>
    <property type="match status" value="1"/>
</dbReference>
<dbReference type="Pfam" id="PF13432">
    <property type="entry name" value="TPR_16"/>
    <property type="match status" value="1"/>
</dbReference>
<dbReference type="Pfam" id="PF14559">
    <property type="entry name" value="TPR_19"/>
    <property type="match status" value="1"/>
</dbReference>
<dbReference type="SMART" id="SM00386">
    <property type="entry name" value="HAT"/>
    <property type="match status" value="13"/>
</dbReference>
<dbReference type="SMART" id="SM00028">
    <property type="entry name" value="TPR"/>
    <property type="match status" value="4"/>
</dbReference>
<dbReference type="SUPFAM" id="SSF48452">
    <property type="entry name" value="TPR-like"/>
    <property type="match status" value="4"/>
</dbReference>
<comment type="function">
    <text evidence="1">Involved in pre-mRNA splicing as component of the U4/U6-U5 tri-snRNP complex, one of the building blocks of the spliceosome. Enhances dihydrotestosterone-induced transactivation activity of AR, as well as dexamethasone-induced transactivation activity of NR3C1, but does not affect estrogen-induced transactivation.</text>
</comment>
<comment type="subunit">
    <text evidence="1">Identified in the spliceosome B complex. Identified in the spliceosome C complex. Associates with the U5 snRNP particle. Component of the U4/U6-U5 tri-snRNP complex composed of the U4, U6 and U5 snRNAs and at least PRPF3, PRPF4, PRPF6, PRPF8, PRPF31, SNRNP200, TXNL4A, SNRNP40, DDX23, CD2BP2, PPIH, SNU13, EFTUD2, SART1 and USP39, LSm proteins LSm2-8 and Sm proteins. Interacts with ARAF1. Interacts with AR and NR3C1, but not ESR1, independently of the presence of hormones. Interacts with USH1G.</text>
</comment>
<comment type="subcellular location">
    <subcellularLocation>
        <location evidence="1">Nucleus</location>
        <location evidence="1">Nucleoplasm</location>
    </subcellularLocation>
    <subcellularLocation>
        <location evidence="1">Nucleus speckle</location>
    </subcellularLocation>
    <text evidence="1">Localized in splicing speckles.</text>
</comment>
<comment type="alternative products">
    <event type="alternative splicing"/>
    <isoform>
        <id>Q91YR7-1</id>
        <name>1</name>
        <sequence type="displayed"/>
    </isoform>
    <isoform>
        <id>Q91YR7-2</id>
        <name>2</name>
        <sequence type="described" ref="VSP_002063 VSP_002064"/>
    </isoform>
</comment>
<comment type="PTM">
    <text evidence="1">Phosphorylated by PRP4K during spliceosome assembly.</text>
</comment>
<proteinExistence type="evidence at protein level"/>
<sequence>MNKKKKPFLGMPAPLGYVPGLGRGATGFTTRSDIGPARDANDPVDDRHAPPGKRTVGDQMKKNQAADDDDEDLNDTNYDEFNGYAGSLFSSGPYEKDDEEADAIYAALDKRMDERRKERREQREKEEIEKYRMERPKIQQQFSDLKRKLAEVTEEEWLSIPEVGDARNKRQRNPRYEKLTPVPDSFFAKHLQTGENHTSVDPRQTQFGGLNTPYPGGLNTPYPGGMTPGLMTPGTGELDMRKIGQARNTLMDMRLSQVSDSVSGQTVVDPKGYLTDLNSMIPTHGGDINDIKKARLLLKSVRETNPHHPPAWIASARLEEVTGKLQVARNLIMKGTEMCPKSEDVWLEAARLQPGDTAKAVVAQAVRHLPQSVRIYIRAAELETDIRAKKRVLRKALEHVPNSVRLWKAAVELEEPEDARIMLSRAVECCPTSVELWLALARLETYENARKVLNKARENIPTDRHIWITAAKLEEANGNTQMVEKIIDRAITSLRANGVEINREQWIQDAEECDRAGSVATCQAVMRAVIGIGIEEEDRKHTWMEDADSCVAHNALECARAIYAYALQVFPSKKSVWLRAAYFEKNHGTRESLEALLQRAVAHCPKAEVLWLMGAKSKWLAGDVPAARSILALAFQANPNSEEIWLAAVKLESENNEYERARRLLAKARSSAPTARVFMKSVKLEWVLGNISAAQELCEEALRHYEDFPKLWMMKGQIEEQGELMEKAREAYNQGLKKCPHSTPLWLLLSRLEEKIGQLTRARAILEKSRLKNPKNPGLWLESVRLEYRAGLKNIANTLMAKALQECPNSGILWSEAVFLEARPQRKTKSVDALKKCEHDPHVLLAVAKLFWSERKITKAREWFHRTVKIDSDLGDAWAFFYKFELQHGTEEQQEEVRKRCENAEPRHGELWCAVSKDITNWQRKIGEILVLVAARIKNTF</sequence>
<feature type="chain" id="PRO_0000205760" description="Pre-mRNA-processing factor 6">
    <location>
        <begin position="1"/>
        <end position="941"/>
    </location>
</feature>
<feature type="repeat" description="HAT 1">
    <location>
        <begin position="384"/>
        <end position="416"/>
    </location>
</feature>
<feature type="repeat" description="HAT 2">
    <location>
        <begin position="418"/>
        <end position="444"/>
    </location>
</feature>
<feature type="repeat" description="HAT 3">
    <location>
        <begin position="445"/>
        <end position="476"/>
    </location>
</feature>
<feature type="repeat" description="HAT 4">
    <location>
        <begin position="554"/>
        <end position="586"/>
    </location>
</feature>
<feature type="repeat" description="HAT 5">
    <location>
        <begin position="588"/>
        <end position="620"/>
    </location>
</feature>
<feature type="repeat" description="HAT 6">
    <location>
        <begin position="622"/>
        <end position="654"/>
    </location>
</feature>
<feature type="repeat" description="HAT 7">
    <location>
        <begin position="689"/>
        <end position="721"/>
    </location>
</feature>
<feature type="repeat" description="HAT 8">
    <location>
        <begin position="723"/>
        <end position="755"/>
    </location>
</feature>
<feature type="repeat" description="HAT 9">
    <location>
        <begin position="855"/>
        <end position="887"/>
    </location>
</feature>
<feature type="region of interest" description="Disordered" evidence="2">
    <location>
        <begin position="1"/>
        <end position="79"/>
    </location>
</feature>
<feature type="compositionally biased region" description="Basic and acidic residues" evidence="2">
    <location>
        <begin position="39"/>
        <end position="65"/>
    </location>
</feature>
<feature type="compositionally biased region" description="Acidic residues" evidence="2">
    <location>
        <begin position="66"/>
        <end position="78"/>
    </location>
</feature>
<feature type="modified residue" description="Phosphoserine" evidence="1">
    <location>
        <position position="143"/>
    </location>
</feature>
<feature type="modified residue" description="Phosphothreonine" evidence="1">
    <location>
        <position position="180"/>
    </location>
</feature>
<feature type="modified residue" description="Phosphothreonine" evidence="1">
    <location>
        <position position="266"/>
    </location>
</feature>
<feature type="modified residue" description="Phosphothreonine" evidence="5">
    <location>
        <position position="275"/>
    </location>
</feature>
<feature type="modified residue" description="Phosphoserine" evidence="5">
    <location>
        <position position="279"/>
    </location>
</feature>
<feature type="splice variant" id="VSP_002063" description="In isoform 2." evidence="3">
    <original>CVAHNALECARAIYAYALQVF</original>
    <variation>VSFLACFPACSLDRNSGPINL</variation>
    <location>
        <begin position="550"/>
        <end position="570"/>
    </location>
</feature>
<feature type="splice variant" id="VSP_002064" description="In isoform 2." evidence="3">
    <location>
        <begin position="571"/>
        <end position="941"/>
    </location>
</feature>
<feature type="sequence conflict" description="In Ref. 1; BAE26451." evidence="4" ref="1">
    <original>T</original>
    <variation>A</variation>
    <location>
        <position position="232"/>
    </location>
</feature>
<feature type="sequence conflict" description="In Ref. 1; BAE26451." evidence="4" ref="1">
    <original>K</original>
    <variation>R</variation>
    <location>
        <position position="390"/>
    </location>
</feature>
<accession>Q91YR7</accession>
<accession>Q3ULJ7</accession>
<accession>Q542P0</accession>
<accession>Q8CIK9</accession>
<accession>Q8R3M8</accession>
<accession>Q99JN1</accession>
<accession>Q9CSZ0</accession>
<keyword id="KW-0002">3D-structure</keyword>
<keyword id="KW-0025">Alternative splicing</keyword>
<keyword id="KW-0507">mRNA processing</keyword>
<keyword id="KW-0508">mRNA splicing</keyword>
<keyword id="KW-0539">Nucleus</keyword>
<keyword id="KW-0597">Phosphoprotein</keyword>
<keyword id="KW-1185">Reference proteome</keyword>
<keyword id="KW-0677">Repeat</keyword>
<keyword id="KW-0747">Spliceosome</keyword>
<organism>
    <name type="scientific">Mus musculus</name>
    <name type="common">Mouse</name>
    <dbReference type="NCBI Taxonomy" id="10090"/>
    <lineage>
        <taxon>Eukaryota</taxon>
        <taxon>Metazoa</taxon>
        <taxon>Chordata</taxon>
        <taxon>Craniata</taxon>
        <taxon>Vertebrata</taxon>
        <taxon>Euteleostomi</taxon>
        <taxon>Mammalia</taxon>
        <taxon>Eutheria</taxon>
        <taxon>Euarchontoglires</taxon>
        <taxon>Glires</taxon>
        <taxon>Rodentia</taxon>
        <taxon>Myomorpha</taxon>
        <taxon>Muroidea</taxon>
        <taxon>Muridae</taxon>
        <taxon>Murinae</taxon>
        <taxon>Mus</taxon>
        <taxon>Mus</taxon>
    </lineage>
</organism>
<reference key="1">
    <citation type="journal article" date="2005" name="Science">
        <title>The transcriptional landscape of the mammalian genome.</title>
        <authorList>
            <person name="Carninci P."/>
            <person name="Kasukawa T."/>
            <person name="Katayama S."/>
            <person name="Gough J."/>
            <person name="Frith M.C."/>
            <person name="Maeda N."/>
            <person name="Oyama R."/>
            <person name="Ravasi T."/>
            <person name="Lenhard B."/>
            <person name="Wells C."/>
            <person name="Kodzius R."/>
            <person name="Shimokawa K."/>
            <person name="Bajic V.B."/>
            <person name="Brenner S.E."/>
            <person name="Batalov S."/>
            <person name="Forrest A.R."/>
            <person name="Zavolan M."/>
            <person name="Davis M.J."/>
            <person name="Wilming L.G."/>
            <person name="Aidinis V."/>
            <person name="Allen J.E."/>
            <person name="Ambesi-Impiombato A."/>
            <person name="Apweiler R."/>
            <person name="Aturaliya R.N."/>
            <person name="Bailey T.L."/>
            <person name="Bansal M."/>
            <person name="Baxter L."/>
            <person name="Beisel K.W."/>
            <person name="Bersano T."/>
            <person name="Bono H."/>
            <person name="Chalk A.M."/>
            <person name="Chiu K.P."/>
            <person name="Choudhary V."/>
            <person name="Christoffels A."/>
            <person name="Clutterbuck D.R."/>
            <person name="Crowe M.L."/>
            <person name="Dalla E."/>
            <person name="Dalrymple B.P."/>
            <person name="de Bono B."/>
            <person name="Della Gatta G."/>
            <person name="di Bernardo D."/>
            <person name="Down T."/>
            <person name="Engstrom P."/>
            <person name="Fagiolini M."/>
            <person name="Faulkner G."/>
            <person name="Fletcher C.F."/>
            <person name="Fukushima T."/>
            <person name="Furuno M."/>
            <person name="Futaki S."/>
            <person name="Gariboldi M."/>
            <person name="Georgii-Hemming P."/>
            <person name="Gingeras T.R."/>
            <person name="Gojobori T."/>
            <person name="Green R.E."/>
            <person name="Gustincich S."/>
            <person name="Harbers M."/>
            <person name="Hayashi Y."/>
            <person name="Hensch T.K."/>
            <person name="Hirokawa N."/>
            <person name="Hill D."/>
            <person name="Huminiecki L."/>
            <person name="Iacono M."/>
            <person name="Ikeo K."/>
            <person name="Iwama A."/>
            <person name="Ishikawa T."/>
            <person name="Jakt M."/>
            <person name="Kanapin A."/>
            <person name="Katoh M."/>
            <person name="Kawasawa Y."/>
            <person name="Kelso J."/>
            <person name="Kitamura H."/>
            <person name="Kitano H."/>
            <person name="Kollias G."/>
            <person name="Krishnan S.P."/>
            <person name="Kruger A."/>
            <person name="Kummerfeld S.K."/>
            <person name="Kurochkin I.V."/>
            <person name="Lareau L.F."/>
            <person name="Lazarevic D."/>
            <person name="Lipovich L."/>
            <person name="Liu J."/>
            <person name="Liuni S."/>
            <person name="McWilliam S."/>
            <person name="Madan Babu M."/>
            <person name="Madera M."/>
            <person name="Marchionni L."/>
            <person name="Matsuda H."/>
            <person name="Matsuzawa S."/>
            <person name="Miki H."/>
            <person name="Mignone F."/>
            <person name="Miyake S."/>
            <person name="Morris K."/>
            <person name="Mottagui-Tabar S."/>
            <person name="Mulder N."/>
            <person name="Nakano N."/>
            <person name="Nakauchi H."/>
            <person name="Ng P."/>
            <person name="Nilsson R."/>
            <person name="Nishiguchi S."/>
            <person name="Nishikawa S."/>
            <person name="Nori F."/>
            <person name="Ohara O."/>
            <person name="Okazaki Y."/>
            <person name="Orlando V."/>
            <person name="Pang K.C."/>
            <person name="Pavan W.J."/>
            <person name="Pavesi G."/>
            <person name="Pesole G."/>
            <person name="Petrovsky N."/>
            <person name="Piazza S."/>
            <person name="Reed J."/>
            <person name="Reid J.F."/>
            <person name="Ring B.Z."/>
            <person name="Ringwald M."/>
            <person name="Rost B."/>
            <person name="Ruan Y."/>
            <person name="Salzberg S.L."/>
            <person name="Sandelin A."/>
            <person name="Schneider C."/>
            <person name="Schoenbach C."/>
            <person name="Sekiguchi K."/>
            <person name="Semple C.A."/>
            <person name="Seno S."/>
            <person name="Sessa L."/>
            <person name="Sheng Y."/>
            <person name="Shibata Y."/>
            <person name="Shimada H."/>
            <person name="Shimada K."/>
            <person name="Silva D."/>
            <person name="Sinclair B."/>
            <person name="Sperling S."/>
            <person name="Stupka E."/>
            <person name="Sugiura K."/>
            <person name="Sultana R."/>
            <person name="Takenaka Y."/>
            <person name="Taki K."/>
            <person name="Tammoja K."/>
            <person name="Tan S.L."/>
            <person name="Tang S."/>
            <person name="Taylor M.S."/>
            <person name="Tegner J."/>
            <person name="Teichmann S.A."/>
            <person name="Ueda H.R."/>
            <person name="van Nimwegen E."/>
            <person name="Verardo R."/>
            <person name="Wei C.L."/>
            <person name="Yagi K."/>
            <person name="Yamanishi H."/>
            <person name="Zabarovsky E."/>
            <person name="Zhu S."/>
            <person name="Zimmer A."/>
            <person name="Hide W."/>
            <person name="Bult C."/>
            <person name="Grimmond S.M."/>
            <person name="Teasdale R.D."/>
            <person name="Liu E.T."/>
            <person name="Brusic V."/>
            <person name="Quackenbush J."/>
            <person name="Wahlestedt C."/>
            <person name="Mattick J.S."/>
            <person name="Hume D.A."/>
            <person name="Kai C."/>
            <person name="Sasaki D."/>
            <person name="Tomaru Y."/>
            <person name="Fukuda S."/>
            <person name="Kanamori-Katayama M."/>
            <person name="Suzuki M."/>
            <person name="Aoki J."/>
            <person name="Arakawa T."/>
            <person name="Iida J."/>
            <person name="Imamura K."/>
            <person name="Itoh M."/>
            <person name="Kato T."/>
            <person name="Kawaji H."/>
            <person name="Kawagashira N."/>
            <person name="Kawashima T."/>
            <person name="Kojima M."/>
            <person name="Kondo S."/>
            <person name="Konno H."/>
            <person name="Nakano K."/>
            <person name="Ninomiya N."/>
            <person name="Nishio T."/>
            <person name="Okada M."/>
            <person name="Plessy C."/>
            <person name="Shibata K."/>
            <person name="Shiraki T."/>
            <person name="Suzuki S."/>
            <person name="Tagami M."/>
            <person name="Waki K."/>
            <person name="Watahiki A."/>
            <person name="Okamura-Oho Y."/>
            <person name="Suzuki H."/>
            <person name="Kawai J."/>
            <person name="Hayashizaki Y."/>
        </authorList>
    </citation>
    <scope>NUCLEOTIDE SEQUENCE [LARGE SCALE MRNA]</scope>
    <source>
        <strain>C57BL/6J</strain>
        <tissue>Embryo</tissue>
        <tissue>Embryonic head</tissue>
    </source>
</reference>
<reference key="2">
    <citation type="journal article" date="2009" name="PLoS Biol.">
        <title>Lineage-specific biology revealed by a finished genome assembly of the mouse.</title>
        <authorList>
            <person name="Church D.M."/>
            <person name="Goodstadt L."/>
            <person name="Hillier L.W."/>
            <person name="Zody M.C."/>
            <person name="Goldstein S."/>
            <person name="She X."/>
            <person name="Bult C.J."/>
            <person name="Agarwala R."/>
            <person name="Cherry J.L."/>
            <person name="DiCuccio M."/>
            <person name="Hlavina W."/>
            <person name="Kapustin Y."/>
            <person name="Meric P."/>
            <person name="Maglott D."/>
            <person name="Birtle Z."/>
            <person name="Marques A.C."/>
            <person name="Graves T."/>
            <person name="Zhou S."/>
            <person name="Teague B."/>
            <person name="Potamousis K."/>
            <person name="Churas C."/>
            <person name="Place M."/>
            <person name="Herschleb J."/>
            <person name="Runnheim R."/>
            <person name="Forrest D."/>
            <person name="Amos-Landgraf J."/>
            <person name="Schwartz D.C."/>
            <person name="Cheng Z."/>
            <person name="Lindblad-Toh K."/>
            <person name="Eichler E.E."/>
            <person name="Ponting C.P."/>
        </authorList>
    </citation>
    <scope>NUCLEOTIDE SEQUENCE [LARGE SCALE GENOMIC DNA]</scope>
    <source>
        <strain>C57BL/6J</strain>
    </source>
</reference>
<reference key="3">
    <citation type="submission" date="2005-07" db="EMBL/GenBank/DDBJ databases">
        <authorList>
            <person name="Mural R.J."/>
            <person name="Adams M.D."/>
            <person name="Myers E.W."/>
            <person name="Smith H.O."/>
            <person name="Venter J.C."/>
        </authorList>
    </citation>
    <scope>NUCLEOTIDE SEQUENCE [LARGE SCALE GENOMIC DNA]</scope>
</reference>
<reference key="4">
    <citation type="journal article" date="2004" name="Genome Res.">
        <title>The status, quality, and expansion of the NIH full-length cDNA project: the Mammalian Gene Collection (MGC).</title>
        <authorList>
            <consortium name="The MGC Project Team"/>
        </authorList>
    </citation>
    <scope>NUCLEOTIDE SEQUENCE [LARGE SCALE MRNA] (ISOFORMS 1 AND 2)</scope>
    <source>
        <strain>FVB/N</strain>
        <tissue>Mammary gland</tissue>
    </source>
</reference>
<reference key="5">
    <citation type="journal article" date="2010" name="Cell">
        <title>A tissue-specific atlas of mouse protein phosphorylation and expression.</title>
        <authorList>
            <person name="Huttlin E.L."/>
            <person name="Jedrychowski M.P."/>
            <person name="Elias J.E."/>
            <person name="Goswami T."/>
            <person name="Rad R."/>
            <person name="Beausoleil S.A."/>
            <person name="Villen J."/>
            <person name="Haas W."/>
            <person name="Sowa M.E."/>
            <person name="Gygi S.P."/>
        </authorList>
    </citation>
    <scope>PHOSPHORYLATION [LARGE SCALE ANALYSIS] AT THR-275 AND SER-279</scope>
    <scope>IDENTIFICATION BY MASS SPECTROMETRY [LARGE SCALE ANALYSIS]</scope>
    <source>
        <tissue>Brain</tissue>
        <tissue>Lung</tissue>
        <tissue>Spleen</tissue>
        <tissue>Testis</tissue>
    </source>
</reference>
<gene>
    <name type="primary">Prpf6</name>
</gene>
<evidence type="ECO:0000250" key="1">
    <source>
        <dbReference type="UniProtKB" id="O94906"/>
    </source>
</evidence>
<evidence type="ECO:0000256" key="2">
    <source>
        <dbReference type="SAM" id="MobiDB-lite"/>
    </source>
</evidence>
<evidence type="ECO:0000303" key="3">
    <source>
    </source>
</evidence>
<evidence type="ECO:0000305" key="4"/>
<evidence type="ECO:0007744" key="5">
    <source>
    </source>
</evidence>
<name>PRP6_MOUSE</name>
<protein>
    <recommendedName>
        <fullName>Pre-mRNA-processing factor 6</fullName>
    </recommendedName>
    <alternativeName>
        <fullName>PRP6 homolog</fullName>
    </alternativeName>
    <alternativeName>
        <fullName>U5 snRNP-associated 102 kDa protein</fullName>
        <shortName>U5-102 kDa protein</shortName>
    </alternativeName>
</protein>